<keyword id="KW-0011">Acute phase</keyword>
<keyword id="KW-0094">Blood coagulation</keyword>
<keyword id="KW-0106">Calcium</keyword>
<keyword id="KW-1015">Disulfide bond</keyword>
<keyword id="KW-0325">Glycoprotein</keyword>
<keyword id="KW-0356">Hemostasis</keyword>
<keyword id="KW-0479">Metal-binding</keyword>
<keyword id="KW-1185">Reference proteome</keyword>
<keyword id="KW-0677">Repeat</keyword>
<keyword id="KW-0964">Secreted</keyword>
<keyword id="KW-0732">Signal</keyword>
<keyword id="KW-0765">Sulfation</keyword>
<reference key="1">
    <citation type="journal article" date="1993" name="Genomics">
        <title>Sequence of the murine factor VIII cDNA.</title>
        <authorList>
            <person name="Elder B."/>
            <person name="Lakich D."/>
            <person name="Gitschier J."/>
        </authorList>
    </citation>
    <scope>NUCLEOTIDE SEQUENCE [MRNA]</scope>
    <source>
        <strain>C57BL/6 X CBA</strain>
        <tissue>Liver</tissue>
    </source>
</reference>
<reference key="2">
    <citation type="journal article" date="2009" name="PLoS Biol.">
        <title>Lineage-specific biology revealed by a finished genome assembly of the mouse.</title>
        <authorList>
            <person name="Church D.M."/>
            <person name="Goodstadt L."/>
            <person name="Hillier L.W."/>
            <person name="Zody M.C."/>
            <person name="Goldstein S."/>
            <person name="She X."/>
            <person name="Bult C.J."/>
            <person name="Agarwala R."/>
            <person name="Cherry J.L."/>
            <person name="DiCuccio M."/>
            <person name="Hlavina W."/>
            <person name="Kapustin Y."/>
            <person name="Meric P."/>
            <person name="Maglott D."/>
            <person name="Birtle Z."/>
            <person name="Marques A.C."/>
            <person name="Graves T."/>
            <person name="Zhou S."/>
            <person name="Teague B."/>
            <person name="Potamousis K."/>
            <person name="Churas C."/>
            <person name="Place M."/>
            <person name="Herschleb J."/>
            <person name="Runnheim R."/>
            <person name="Forrest D."/>
            <person name="Amos-Landgraf J."/>
            <person name="Schwartz D.C."/>
            <person name="Cheng Z."/>
            <person name="Lindblad-Toh K."/>
            <person name="Eichler E.E."/>
            <person name="Ponting C.P."/>
        </authorList>
    </citation>
    <scope>NUCLEOTIDE SEQUENCE [LARGE SCALE GENOMIC DNA]</scope>
    <source>
        <strain>C57BL/6J</strain>
    </source>
</reference>
<reference key="3">
    <citation type="submission" date="2005-09" db="EMBL/GenBank/DDBJ databases">
        <authorList>
            <person name="Mural R.J."/>
            <person name="Adams M.D."/>
            <person name="Myers E.W."/>
            <person name="Smith H.O."/>
            <person name="Venter J.C."/>
        </authorList>
    </citation>
    <scope>NUCLEOTIDE SEQUENCE [LARGE SCALE GENOMIC DNA]</scope>
</reference>
<dbReference type="EMBL" id="L05573">
    <property type="protein sequence ID" value="AAA37385.1"/>
    <property type="molecule type" value="mRNA"/>
</dbReference>
<dbReference type="EMBL" id="AL731844">
    <property type="status" value="NOT_ANNOTATED_CDS"/>
    <property type="molecule type" value="Genomic_DNA"/>
</dbReference>
<dbReference type="EMBL" id="AL808110">
    <property type="status" value="NOT_ANNOTATED_CDS"/>
    <property type="molecule type" value="Genomic_DNA"/>
</dbReference>
<dbReference type="EMBL" id="CH466576">
    <property type="protein sequence ID" value="EDL29229.1"/>
    <property type="molecule type" value="Genomic_DNA"/>
</dbReference>
<dbReference type="CCDS" id="CCDS30238.1"/>
<dbReference type="PIR" id="A47004">
    <property type="entry name" value="A47004"/>
</dbReference>
<dbReference type="RefSeq" id="NP_032003.2">
    <property type="nucleotide sequence ID" value="NM_007977.2"/>
</dbReference>
<dbReference type="SMR" id="Q06194"/>
<dbReference type="FunCoup" id="Q06194">
    <property type="interactions" value="50"/>
</dbReference>
<dbReference type="STRING" id="10090.ENSMUSP00000033539"/>
<dbReference type="GlyCosmos" id="Q06194">
    <property type="glycosylation" value="26 sites, No reported glycans"/>
</dbReference>
<dbReference type="GlyGen" id="Q06194">
    <property type="glycosylation" value="28 sites, 1 O-linked glycan (2 sites)"/>
</dbReference>
<dbReference type="iPTMnet" id="Q06194"/>
<dbReference type="PhosphoSitePlus" id="Q06194"/>
<dbReference type="PaxDb" id="10090-ENSMUSP00000033539"/>
<dbReference type="ProteomicsDB" id="271544"/>
<dbReference type="Antibodypedia" id="393">
    <property type="antibodies" value="1227 antibodies from 41 providers"/>
</dbReference>
<dbReference type="DNASU" id="14069"/>
<dbReference type="Ensembl" id="ENSMUST00000033539.13">
    <property type="protein sequence ID" value="ENSMUSP00000033539.7"/>
    <property type="gene ID" value="ENSMUSG00000031196.14"/>
</dbReference>
<dbReference type="GeneID" id="14069"/>
<dbReference type="KEGG" id="mmu:14069"/>
<dbReference type="UCSC" id="uc009tpt.3">
    <property type="organism name" value="mouse"/>
</dbReference>
<dbReference type="AGR" id="MGI:88383"/>
<dbReference type="CTD" id="2157"/>
<dbReference type="MGI" id="MGI:88383">
    <property type="gene designation" value="F8"/>
</dbReference>
<dbReference type="VEuPathDB" id="HostDB:ENSMUSG00000031196"/>
<dbReference type="eggNOG" id="ENOG502QSFZ">
    <property type="taxonomic scope" value="Eukaryota"/>
</dbReference>
<dbReference type="GeneTree" id="ENSGT00940000160294"/>
<dbReference type="HOGENOM" id="CLU_000948_1_0_1"/>
<dbReference type="InParanoid" id="Q06194"/>
<dbReference type="OMA" id="TWDYAPH"/>
<dbReference type="OrthoDB" id="2121828at2759"/>
<dbReference type="PhylomeDB" id="Q06194"/>
<dbReference type="TreeFam" id="TF329807"/>
<dbReference type="Reactome" id="R-MMU-114608">
    <property type="pathway name" value="Platelet degranulation"/>
</dbReference>
<dbReference type="Reactome" id="R-MMU-140837">
    <property type="pathway name" value="Intrinsic Pathway of Fibrin Clot Formation"/>
</dbReference>
<dbReference type="Reactome" id="R-MMU-140875">
    <property type="pathway name" value="Common Pathway of Fibrin Clot Formation"/>
</dbReference>
<dbReference type="Reactome" id="R-MMU-163841">
    <property type="pathway name" value="Gamma carboxylation, hypusinylation, hydroxylation, and arylsulfatase activation"/>
</dbReference>
<dbReference type="Reactome" id="R-MMU-204005">
    <property type="pathway name" value="COPII-mediated vesicle transport"/>
</dbReference>
<dbReference type="Reactome" id="R-MMU-5694530">
    <property type="pathway name" value="Cargo concentration in the ER"/>
</dbReference>
<dbReference type="BioGRID-ORCS" id="14069">
    <property type="hits" value="3 hits in 78 CRISPR screens"/>
</dbReference>
<dbReference type="ChiTaRS" id="F8">
    <property type="organism name" value="mouse"/>
</dbReference>
<dbReference type="PRO" id="PR:Q06194"/>
<dbReference type="Proteomes" id="UP000000589">
    <property type="component" value="Chromosome X"/>
</dbReference>
<dbReference type="RNAct" id="Q06194">
    <property type="molecule type" value="protein"/>
</dbReference>
<dbReference type="Bgee" id="ENSMUSG00000031196">
    <property type="expression patterns" value="Expressed in mesenteric lymph node and 73 other cell types or tissues"/>
</dbReference>
<dbReference type="ExpressionAtlas" id="Q06194">
    <property type="expression patterns" value="baseline and differential"/>
</dbReference>
<dbReference type="GO" id="GO:0005576">
    <property type="term" value="C:extracellular region"/>
    <property type="evidence" value="ECO:0007669"/>
    <property type="project" value="UniProtKB-SubCell"/>
</dbReference>
<dbReference type="GO" id="GO:0005507">
    <property type="term" value="F:copper ion binding"/>
    <property type="evidence" value="ECO:0007669"/>
    <property type="project" value="InterPro"/>
</dbReference>
<dbReference type="GO" id="GO:0016491">
    <property type="term" value="F:oxidoreductase activity"/>
    <property type="evidence" value="ECO:0007669"/>
    <property type="project" value="InterPro"/>
</dbReference>
<dbReference type="GO" id="GO:0006953">
    <property type="term" value="P:acute-phase response"/>
    <property type="evidence" value="ECO:0007669"/>
    <property type="project" value="UniProtKB-KW"/>
</dbReference>
<dbReference type="GO" id="GO:0007596">
    <property type="term" value="P:blood coagulation"/>
    <property type="evidence" value="ECO:0007669"/>
    <property type="project" value="UniProtKB-KW"/>
</dbReference>
<dbReference type="CDD" id="cd04227">
    <property type="entry name" value="CuRO_3_FVIII_like"/>
    <property type="match status" value="1"/>
</dbReference>
<dbReference type="CDD" id="cd00057">
    <property type="entry name" value="FA58C"/>
    <property type="match status" value="2"/>
</dbReference>
<dbReference type="FunFam" id="2.60.120.260:FF:000002">
    <property type="entry name" value="Coagulation factor VIII"/>
    <property type="match status" value="2"/>
</dbReference>
<dbReference type="FunFam" id="2.60.40.420:FF:000047">
    <property type="entry name" value="Coagulation factor VIII"/>
    <property type="match status" value="1"/>
</dbReference>
<dbReference type="FunFam" id="2.60.40.420:FF:000051">
    <property type="entry name" value="Coagulation factor VIII"/>
    <property type="match status" value="1"/>
</dbReference>
<dbReference type="FunFam" id="2.60.40.420:FF:000011">
    <property type="entry name" value="Coagulation factor VIII (Predicted)"/>
    <property type="match status" value="1"/>
</dbReference>
<dbReference type="FunFam" id="2.60.40.420:FF:000026">
    <property type="entry name" value="Coagulation factor VIII (Predicted)"/>
    <property type="match status" value="1"/>
</dbReference>
<dbReference type="FunFam" id="2.60.40.420:FF:000032">
    <property type="entry name" value="Coagulation factor VIII (Predicted)"/>
    <property type="match status" value="1"/>
</dbReference>
<dbReference type="FunFam" id="2.60.40.420:FF:000035">
    <property type="entry name" value="Coagulation factor VIII (Predicted)"/>
    <property type="match status" value="1"/>
</dbReference>
<dbReference type="Gene3D" id="2.60.40.420">
    <property type="entry name" value="Cupredoxins - blue copper proteins"/>
    <property type="match status" value="6"/>
</dbReference>
<dbReference type="Gene3D" id="2.60.120.260">
    <property type="entry name" value="Galactose-binding domain-like"/>
    <property type="match status" value="2"/>
</dbReference>
<dbReference type="InterPro" id="IPR011707">
    <property type="entry name" value="Cu-oxidase-like_N"/>
</dbReference>
<dbReference type="InterPro" id="IPR011706">
    <property type="entry name" value="Cu-oxidase_C"/>
</dbReference>
<dbReference type="InterPro" id="IPR033138">
    <property type="entry name" value="Cu_oxidase_CS"/>
</dbReference>
<dbReference type="InterPro" id="IPR008972">
    <property type="entry name" value="Cupredoxin"/>
</dbReference>
<dbReference type="InterPro" id="IPR000421">
    <property type="entry name" value="FA58C"/>
</dbReference>
<dbReference type="InterPro" id="IPR024715">
    <property type="entry name" value="Factor_5/8-like"/>
</dbReference>
<dbReference type="InterPro" id="IPR008979">
    <property type="entry name" value="Galactose-bd-like_sf"/>
</dbReference>
<dbReference type="InterPro" id="IPR050633">
    <property type="entry name" value="Neuropilin_MCO_CoagFactor"/>
</dbReference>
<dbReference type="PANTHER" id="PTHR46806:SF7">
    <property type="entry name" value="COAGULATION FACTOR VIII"/>
    <property type="match status" value="1"/>
</dbReference>
<dbReference type="PANTHER" id="PTHR46806">
    <property type="entry name" value="F5/8 TYPE C DOMAIN-CONTAINING PROTEIN"/>
    <property type="match status" value="1"/>
</dbReference>
<dbReference type="Pfam" id="PF07731">
    <property type="entry name" value="Cu-oxidase_2"/>
    <property type="match status" value="1"/>
</dbReference>
<dbReference type="Pfam" id="PF07732">
    <property type="entry name" value="Cu-oxidase_3"/>
    <property type="match status" value="2"/>
</dbReference>
<dbReference type="Pfam" id="PF00754">
    <property type="entry name" value="F5_F8_type_C"/>
    <property type="match status" value="2"/>
</dbReference>
<dbReference type="PIRSF" id="PIRSF000354">
    <property type="entry name" value="Factors_V_VIII"/>
    <property type="match status" value="1"/>
</dbReference>
<dbReference type="SMART" id="SM00231">
    <property type="entry name" value="FA58C"/>
    <property type="match status" value="2"/>
</dbReference>
<dbReference type="SUPFAM" id="SSF49503">
    <property type="entry name" value="Cupredoxins"/>
    <property type="match status" value="6"/>
</dbReference>
<dbReference type="SUPFAM" id="SSF49785">
    <property type="entry name" value="Galactose-binding domain-like"/>
    <property type="match status" value="2"/>
</dbReference>
<dbReference type="PROSITE" id="PS01285">
    <property type="entry name" value="FA58C_1"/>
    <property type="match status" value="2"/>
</dbReference>
<dbReference type="PROSITE" id="PS01286">
    <property type="entry name" value="FA58C_2"/>
    <property type="match status" value="2"/>
</dbReference>
<dbReference type="PROSITE" id="PS50022">
    <property type="entry name" value="FA58C_3"/>
    <property type="match status" value="2"/>
</dbReference>
<dbReference type="PROSITE" id="PS00079">
    <property type="entry name" value="MULTICOPPER_OXIDASE1"/>
    <property type="match status" value="3"/>
</dbReference>
<proteinExistence type="evidence at transcript level"/>
<gene>
    <name type="primary">F8</name>
    <name type="synonym">Cf8</name>
    <name type="synonym">F8c</name>
</gene>
<sequence>MQIALFACFFLSLFNFCSSAIRRYYLGAVELSWNYIQSDLLSVLHTDSRFLPRMSTSFPFNTSIMYKKTVFVEYKDQLFNIAKPRPPWMGLLGPTIWTEVHDTVVITLKNMASHPVSLHAVGVSYWKASEGDEYEDQTSQMEKEDDKVFPGESHTYVWQVLKENGPMASDPPCLTYSYMSHVDLVKDLNSGLIGALLVCKEGSLSKERTQMLYQFVLLFAVFDEGKSWHSETNDSYTQSMDSASARDWPKMHTVNGYVNRSLPGLIGCHRKSVYWHVIGMGTTPEIHSIFLEGHTFFVRNHRQASLEISPITFLTAQTLLIDLGQFLLFCHISSHKHDGMEAYVKVDSCPEESQWQKKNNNEEMEDYDDDLYSEMDMFTLDYDSSPFIQIRSVAKKYPKTWIHYISAEEEDWDYAPSVPTSDNGSYKSQYLSNGPHRIGRKYKKVRFIAYTDETFKTRETIQHESGLLGPLLYGEVGDTLLIIFKNQASRPYNIYPHGITDVSPLHARRLPRGIKHVKDLPIHPGEIFKYKWTVTVEDGPTKSDPRCLTRYYSSFINPERDLASGLIGPLLICYKESVDQRGNQMMSDKRNVILFSIFDENQSWYITENMQRFLPNAAKTQPQDPGFQASNIMHSINGYVFDSLELTVCLHEVAYWHILSVGAQTDFLSIFFSGYTFKHKMVYEDTLTLFPFSGETVFMSMENPGLWVLGCHNSDFRKRGMTALLKVSSCDKSTSDYYEEIYEDIPTQLVNENNVIDPRSFFQNTNHPNTRKKKFKDSTIPKNDMEKIEPQFEEIAEMLKVQSVSVSDMLMLLGQSHPTPHGLFLSDGQEAIYEAIHDDHSPNAIDSNEGPSKVTQLRPESHHSEKIVFTPQPGLQLRSNKSLETTIEVKWKKLGLQVSSLPSNLMTTTILSDNLKATFEKTDSSGFPDMPVHSSSKLSTTAFGKKAYSLVGSHVPLNVSEENSDSNILDSTLMYSQESLPRDNILSMENDRLLREKRFHGIALLTKDNTLFKDNVSLMKTNKTYNHSTTNEKLHTESPTSIENSTTDLQDAILKVNSEIQEVTALIHDGTLLGKNSTYLRLNHMLNRTTSTKNKDIFHRKDEDPIPQDEENTIMPFSKMLFLSESSNWFKKTNGNNSLNSEQEHSPKQLVYLMFKKYVKNQSFLSEKNKVTVEQDGFTKNIGLKDMAFPHNMSIFLTTLSNVHENGRHNQEKNIQEEIEKEALIEEKVVLPQVHEATGSKNFLKDILILGTRQNISLYEVHVPVLQNITSINNSTNTVQIHMEHFFKRRKDKETNSEGLVNKTREMVKNYPSQKNITTQRSKRALGQFRLSTQWLKTINCSTQCIIKQIDHSKEMKKFITKSSLSDSSVIKSTTQTNSSDSHIVKTSAFPPIDLKRSPFQNKFSHVQASSYIYDFKTKSSRIQESNNFLKETKINNPSLAILPWNMFIDQGKFTSPGKSNTNSVTYKKRENIIFLKPTLPEESGKIELLPQVSIQEEEILPTETSHGSPGHLNLMKEVFLQKIQGPTKWNKAKRHGESIKGKTESSKNTRSKLLNHHAWDYHYAAQIPKDMWKSKEKSPEIISIKQEDTILSLRPHGNSHSIGANEKQNWPQRETTWVKQGQTQRTCSQIPPVLKRHQRELSAFQSEQEATDYDDAITIETIEDFDIYSEDIKQGPRSFQQKTRHYFIAAVERLWDYGMSTSHVLRNRYQSDNVPQFKKVVFQEFTDGSFSQPLYRGELNEHLGLLGPYIRAEVEDNIMVTFKNQASRPYSFYSSLISYKEDQRGEEPRRNFVKPNETKIYFWKVQHHMAPTEDEFDCKAWAYFSDVDLERDMHSGLIGPLLICHANTLNPAHGRQVSVQEFALLFTIFDETKSWYFTENVKRNCKTPCNFQMEDPTLKENYRFHAINGYVMDTLPGLVMAQDQRIRWYLLSMGNNENIQSIHFSGHVFTVRKKEEYKMAVYNLYPGVFETLEMIPSRAGIWRVECLIGEHLQAGMSTLFLVYSKQCQIPLGMASGSIRDFQITASGHYGQWAPNLARLHYSGSINAWSTKEPFSWIKVDLLAPMIVHGIKTQGARQKFSSLYISQFIIMYSLDGKKWLSYQGNSTGTLMVFFGNVDSSGIKHNSFNPPIIARYIRLHPTHSSIRSTLRMELMGCDLNSCSIPLGMESKVISDTQITASSYFTNMFATWSPSQARLHLQGRTNAWRPQVNDPKQWLQVDLQKTMKVTGIITQGVKSLFTSMFVKEFLISSSQDGHHWTQILYNGKVKVFQGNQDSSTPMMNSLDPPLLTRYLRIHPQIWEHQIALRLEILGCEAQQQY</sequence>
<accession>Q06194</accession>
<accession>A2AN88</accession>
<organism>
    <name type="scientific">Mus musculus</name>
    <name type="common">Mouse</name>
    <dbReference type="NCBI Taxonomy" id="10090"/>
    <lineage>
        <taxon>Eukaryota</taxon>
        <taxon>Metazoa</taxon>
        <taxon>Chordata</taxon>
        <taxon>Craniata</taxon>
        <taxon>Vertebrata</taxon>
        <taxon>Euteleostomi</taxon>
        <taxon>Mammalia</taxon>
        <taxon>Eutheria</taxon>
        <taxon>Euarchontoglires</taxon>
        <taxon>Glires</taxon>
        <taxon>Rodentia</taxon>
        <taxon>Myomorpha</taxon>
        <taxon>Muroidea</taxon>
        <taxon>Muridae</taxon>
        <taxon>Murinae</taxon>
        <taxon>Mus</taxon>
        <taxon>Mus</taxon>
    </lineage>
</organism>
<evidence type="ECO:0000250" key="1"/>
<evidence type="ECO:0000250" key="2">
    <source>
        <dbReference type="UniProtKB" id="P00451"/>
    </source>
</evidence>
<evidence type="ECO:0000255" key="3"/>
<evidence type="ECO:0000255" key="4">
    <source>
        <dbReference type="PROSITE-ProRule" id="PRU00081"/>
    </source>
</evidence>
<evidence type="ECO:0000256" key="5">
    <source>
        <dbReference type="SAM" id="MobiDB-lite"/>
    </source>
</evidence>
<evidence type="ECO:0000305" key="6"/>
<protein>
    <recommendedName>
        <fullName>Coagulation factor VIII</fullName>
    </recommendedName>
    <alternativeName>
        <fullName>Procoagulant component</fullName>
    </alternativeName>
</protein>
<feature type="signal peptide" evidence="3">
    <location>
        <begin position="1"/>
        <end position="19"/>
    </location>
</feature>
<feature type="chain" id="PRO_0000002972" description="Coagulation factor VIII">
    <location>
        <begin position="20"/>
        <end position="2319"/>
    </location>
</feature>
<feature type="domain" description="F5/8 type A 1">
    <location>
        <begin position="20"/>
        <end position="349"/>
    </location>
</feature>
<feature type="domain" description="Plastocyanin-like 1">
    <location>
        <begin position="20"/>
        <end position="199"/>
    </location>
</feature>
<feature type="domain" description="Plastocyanin-like 2">
    <location>
        <begin position="207"/>
        <end position="349"/>
    </location>
</feature>
<feature type="domain" description="F5/8 type A 2">
    <location>
        <begin position="399"/>
        <end position="730"/>
    </location>
</feature>
<feature type="domain" description="Plastocyanin-like 3">
    <location>
        <begin position="399"/>
        <end position="573"/>
    </location>
</feature>
<feature type="domain" description="Plastocyanin-like 4">
    <location>
        <begin position="583"/>
        <end position="730"/>
    </location>
</feature>
<feature type="domain" description="F5/8 type A 3">
    <location>
        <begin position="1683"/>
        <end position="2008"/>
    </location>
</feature>
<feature type="domain" description="Plastocyanin-like 5">
    <location>
        <begin position="1683"/>
        <end position="1845"/>
    </location>
</feature>
<feature type="domain" description="Plastocyanin-like 6">
    <location>
        <begin position="1855"/>
        <end position="2008"/>
    </location>
</feature>
<feature type="domain" description="F5/8 type C 1" evidence="4">
    <location>
        <begin position="2008"/>
        <end position="2156"/>
    </location>
</feature>
<feature type="domain" description="F5/8 type C 2" evidence="4">
    <location>
        <begin position="2161"/>
        <end position="2313"/>
    </location>
</feature>
<feature type="region of interest" description="B">
    <location>
        <begin position="760"/>
        <end position="1640"/>
    </location>
</feature>
<feature type="region of interest" description="Disordered" evidence="5">
    <location>
        <begin position="1530"/>
        <end position="1549"/>
    </location>
</feature>
<feature type="compositionally biased region" description="Basic and acidic residues" evidence="5">
    <location>
        <begin position="1536"/>
        <end position="1548"/>
    </location>
</feature>
<feature type="site" description="Cleavage; by thrombin" evidence="1">
    <location>
        <begin position="391"/>
        <end position="392"/>
    </location>
</feature>
<feature type="site" description="Cleavage; by thrombin" evidence="1">
    <location>
        <begin position="759"/>
        <end position="760"/>
    </location>
</feature>
<feature type="site" description="Cleavage (activation)" evidence="1">
    <location>
        <begin position="1324"/>
        <end position="1325"/>
    </location>
</feature>
<feature type="site" description="Cleavage (activation)" evidence="1">
    <location>
        <begin position="1640"/>
        <end position="1641"/>
    </location>
</feature>
<feature type="site" description="Cleavage; by thrombin" evidence="1">
    <location>
        <begin position="1678"/>
        <end position="1679"/>
    </location>
</feature>
<feature type="modified residue" description="Sulfotyrosine" evidence="1">
    <location>
        <position position="367"/>
    </location>
</feature>
<feature type="modified residue" description="Sulfotyrosine" evidence="1">
    <location>
        <position position="737"/>
    </location>
</feature>
<feature type="modified residue" description="Sulfotyrosine" evidence="1">
    <location>
        <position position="738"/>
    </location>
</feature>
<feature type="modified residue" description="Sulfotyrosine" evidence="1">
    <location>
        <position position="742"/>
    </location>
</feature>
<feature type="modified residue" description="Sulfotyrosine" evidence="1">
    <location>
        <position position="1669"/>
    </location>
</feature>
<feature type="modified residue" description="Sulfotyrosine" evidence="1">
    <location>
        <position position="1687"/>
    </location>
</feature>
<feature type="glycosylation site" description="N-linked (GlcNAc...) asparagine" evidence="3">
    <location>
        <position position="61"/>
    </location>
</feature>
<feature type="glycosylation site" description="N-linked (GlcNAc...) asparagine" evidence="3">
    <location>
        <position position="233"/>
    </location>
</feature>
<feature type="glycosylation site" description="N-linked (GlcNAc...) asparagine" evidence="3">
    <location>
        <position position="259"/>
    </location>
</feature>
<feature type="glycosylation site" description="N-linked (GlcNAc...) asparagine" evidence="3">
    <location>
        <position position="423"/>
    </location>
</feature>
<feature type="glycosylation site" description="N-linked (GlcNAc...) asparagine" evidence="3">
    <location>
        <position position="601"/>
    </location>
</feature>
<feature type="glycosylation site" description="N-linked (GlcNAc...) asparagine" evidence="3">
    <location>
        <position position="880"/>
    </location>
</feature>
<feature type="glycosylation site" description="N-linked (GlcNAc...) asparagine" evidence="3">
    <location>
        <position position="958"/>
    </location>
</feature>
<feature type="glycosylation site" description="N-linked (GlcNAc...) asparagine" evidence="3">
    <location>
        <position position="1015"/>
    </location>
</feature>
<feature type="glycosylation site" description="N-linked (GlcNAc...) asparagine" evidence="3">
    <location>
        <position position="1022"/>
    </location>
</feature>
<feature type="glycosylation site" description="N-linked (GlcNAc...) asparagine" evidence="3">
    <location>
        <position position="1026"/>
    </location>
</feature>
<feature type="glycosylation site" description="N-linked (GlcNAc...) asparagine" evidence="3">
    <location>
        <position position="1044"/>
    </location>
</feature>
<feature type="glycosylation site" description="N-linked (GlcNAc...) asparagine" evidence="3">
    <location>
        <position position="1076"/>
    </location>
</feature>
<feature type="glycosylation site" description="N-linked (GlcNAc...) asparagine" evidence="3">
    <location>
        <position position="1087"/>
    </location>
</feature>
<feature type="glycosylation site" description="N-linked (GlcNAc...) asparagine" evidence="3">
    <location>
        <position position="1136"/>
    </location>
</feature>
<feature type="glycosylation site" description="N-linked (GlcNAc...) asparagine" evidence="3">
    <location>
        <position position="1161"/>
    </location>
</feature>
<feature type="glycosylation site" description="N-linked (GlcNAc...) asparagine" evidence="3">
    <location>
        <position position="1192"/>
    </location>
</feature>
<feature type="glycosylation site" description="N-linked (GlcNAc...) asparagine" evidence="3">
    <location>
        <position position="1255"/>
    </location>
</feature>
<feature type="glycosylation site" description="N-linked (GlcNAc...) asparagine" evidence="3">
    <location>
        <position position="1268"/>
    </location>
</feature>
<feature type="glycosylation site" description="N-linked (GlcNAc...) asparagine" evidence="3">
    <location>
        <position position="1273"/>
    </location>
</feature>
<feature type="glycosylation site" description="N-linked (GlcNAc...) asparagine" evidence="3">
    <location>
        <position position="1274"/>
    </location>
</feature>
<feature type="glycosylation site" description="N-linked (GlcNAc...) asparagine" evidence="3">
    <location>
        <position position="1302"/>
    </location>
</feature>
<feature type="glycosylation site" description="N-linked (GlcNAc...) asparagine" evidence="3">
    <location>
        <position position="1316"/>
    </location>
</feature>
<feature type="glycosylation site" description="N-linked (GlcNAc...) asparagine" evidence="3">
    <location>
        <position position="1340"/>
    </location>
</feature>
<feature type="glycosylation site" description="N-linked (GlcNAc...) asparagine" evidence="3">
    <location>
        <position position="1378"/>
    </location>
</feature>
<feature type="glycosylation site" description="N-linked (GlcNAc...) asparagine" evidence="3">
    <location>
        <position position="1797"/>
    </location>
</feature>
<feature type="glycosylation site" description="N-linked (GlcNAc...) asparagine" evidence="3">
    <location>
        <position position="2105"/>
    </location>
</feature>
<feature type="disulfide bond" evidence="6">
    <location>
        <begin position="173"/>
        <end position="199"/>
    </location>
</feature>
<feature type="disulfide bond" evidence="6">
    <location>
        <begin position="547"/>
        <end position="573"/>
    </location>
</feature>
<feature type="disulfide bond" evidence="6">
    <location>
        <begin position="1819"/>
        <end position="1845"/>
    </location>
</feature>
<feature type="disulfide bond" evidence="4">
    <location>
        <begin position="2008"/>
        <end position="2156"/>
    </location>
</feature>
<feature type="disulfide bond" evidence="4">
    <location>
        <begin position="2161"/>
        <end position="2313"/>
    </location>
</feature>
<feature type="sequence conflict" description="In Ref. 1; AAA37385." evidence="6" ref="1">
    <original>V</original>
    <variation>A</variation>
    <location>
        <position position="959"/>
    </location>
</feature>
<feature type="sequence conflict" description="In Ref. 1; AAA37385." evidence="6" ref="1">
    <original>M</original>
    <variation>I</variation>
    <location>
        <position position="988"/>
    </location>
</feature>
<comment type="function">
    <text>Factor VIII, along with calcium and phospholipid, acts as a cofactor for factor IXa when it converts factor X to the activated form, factor Xa.</text>
</comment>
<comment type="subunit">
    <text evidence="1">Interacts with vWF. vWF binding is essential for the stabilization of F8 in circulation (By similarity).</text>
</comment>
<comment type="subcellular location">
    <subcellularLocation>
        <location>Secreted</location>
        <location>Extracellular space</location>
    </subcellularLocation>
</comment>
<comment type="tissue specificity">
    <text>Found in most tissues.</text>
</comment>
<comment type="PTM">
    <text>The binding of vWF and activation depend on the sulfation of Tyr-1669.</text>
</comment>
<comment type="PTM">
    <text evidence="2">Proteolytically cleaved by cathepsin CTSG to produce a partially activated form.</text>
</comment>
<comment type="similarity">
    <text evidence="6">Belongs to the multicopper oxidase family.</text>
</comment>
<name>FA8_MOUSE</name>